<organism>
    <name type="scientific">Staphylococcus aureus (strain bovine RF122 / ET3-1)</name>
    <dbReference type="NCBI Taxonomy" id="273036"/>
    <lineage>
        <taxon>Bacteria</taxon>
        <taxon>Bacillati</taxon>
        <taxon>Bacillota</taxon>
        <taxon>Bacilli</taxon>
        <taxon>Bacillales</taxon>
        <taxon>Staphylococcaceae</taxon>
        <taxon>Staphylococcus</taxon>
    </lineage>
</organism>
<feature type="chain" id="PRO_0000368782" description="ATP synthase subunit b">
    <location>
        <begin position="1"/>
        <end position="173"/>
    </location>
</feature>
<feature type="transmembrane region" description="Helical" evidence="1">
    <location>
        <begin position="15"/>
        <end position="35"/>
    </location>
</feature>
<reference key="1">
    <citation type="journal article" date="2007" name="PLoS ONE">
        <title>Molecular correlates of host specialization in Staphylococcus aureus.</title>
        <authorList>
            <person name="Herron-Olson L."/>
            <person name="Fitzgerald J.R."/>
            <person name="Musser J.M."/>
            <person name="Kapur V."/>
        </authorList>
    </citation>
    <scope>NUCLEOTIDE SEQUENCE [LARGE SCALE GENOMIC DNA]</scope>
    <source>
        <strain>bovine RF122 / ET3-1</strain>
    </source>
</reference>
<dbReference type="EMBL" id="AJ938182">
    <property type="protein sequence ID" value="CAI81680.1"/>
    <property type="molecule type" value="Genomic_DNA"/>
</dbReference>
<dbReference type="RefSeq" id="WP_000140679.1">
    <property type="nucleotide sequence ID" value="NC_007622.1"/>
</dbReference>
<dbReference type="SMR" id="Q2YUJ7"/>
<dbReference type="KEGG" id="sab:SAB1991c"/>
<dbReference type="HOGENOM" id="CLU_079215_4_2_9"/>
<dbReference type="GO" id="GO:0005886">
    <property type="term" value="C:plasma membrane"/>
    <property type="evidence" value="ECO:0007669"/>
    <property type="project" value="UniProtKB-SubCell"/>
</dbReference>
<dbReference type="GO" id="GO:0045259">
    <property type="term" value="C:proton-transporting ATP synthase complex"/>
    <property type="evidence" value="ECO:0007669"/>
    <property type="project" value="UniProtKB-KW"/>
</dbReference>
<dbReference type="GO" id="GO:0046933">
    <property type="term" value="F:proton-transporting ATP synthase activity, rotational mechanism"/>
    <property type="evidence" value="ECO:0007669"/>
    <property type="project" value="UniProtKB-UniRule"/>
</dbReference>
<dbReference type="GO" id="GO:0046961">
    <property type="term" value="F:proton-transporting ATPase activity, rotational mechanism"/>
    <property type="evidence" value="ECO:0007669"/>
    <property type="project" value="TreeGrafter"/>
</dbReference>
<dbReference type="CDD" id="cd06503">
    <property type="entry name" value="ATP-synt_Fo_b"/>
    <property type="match status" value="1"/>
</dbReference>
<dbReference type="HAMAP" id="MF_01398">
    <property type="entry name" value="ATP_synth_b_bprime"/>
    <property type="match status" value="1"/>
</dbReference>
<dbReference type="InterPro" id="IPR028987">
    <property type="entry name" value="ATP_synth_B-like_membr_sf"/>
</dbReference>
<dbReference type="InterPro" id="IPR002146">
    <property type="entry name" value="ATP_synth_b/b'su_bac/chlpt"/>
</dbReference>
<dbReference type="InterPro" id="IPR005864">
    <property type="entry name" value="ATP_synth_F0_bsu_bac"/>
</dbReference>
<dbReference type="InterPro" id="IPR050059">
    <property type="entry name" value="ATP_synthase_B_chain"/>
</dbReference>
<dbReference type="NCBIfam" id="TIGR01144">
    <property type="entry name" value="ATP_synt_b"/>
    <property type="match status" value="1"/>
</dbReference>
<dbReference type="NCBIfam" id="NF009987">
    <property type="entry name" value="PRK13453.1"/>
    <property type="match status" value="1"/>
</dbReference>
<dbReference type="PANTHER" id="PTHR33445:SF1">
    <property type="entry name" value="ATP SYNTHASE SUBUNIT B"/>
    <property type="match status" value="1"/>
</dbReference>
<dbReference type="PANTHER" id="PTHR33445">
    <property type="entry name" value="ATP SYNTHASE SUBUNIT B', CHLOROPLASTIC"/>
    <property type="match status" value="1"/>
</dbReference>
<dbReference type="Pfam" id="PF00430">
    <property type="entry name" value="ATP-synt_B"/>
    <property type="match status" value="1"/>
</dbReference>
<dbReference type="SUPFAM" id="SSF81573">
    <property type="entry name" value="F1F0 ATP synthase subunit B, membrane domain"/>
    <property type="match status" value="1"/>
</dbReference>
<protein>
    <recommendedName>
        <fullName evidence="1">ATP synthase subunit b</fullName>
    </recommendedName>
    <alternativeName>
        <fullName evidence="1">ATP synthase F(0) sector subunit b</fullName>
    </alternativeName>
    <alternativeName>
        <fullName evidence="1">ATPase subunit I</fullName>
    </alternativeName>
    <alternativeName>
        <fullName evidence="1">F-type ATPase subunit b</fullName>
        <shortName evidence="1">F-ATPase subunit b</shortName>
    </alternativeName>
</protein>
<evidence type="ECO:0000255" key="1">
    <source>
        <dbReference type="HAMAP-Rule" id="MF_01398"/>
    </source>
</evidence>
<name>ATPF_STAAB</name>
<proteinExistence type="inferred from homology"/>
<gene>
    <name evidence="1" type="primary">atpF</name>
    <name type="ordered locus">SAB1991c</name>
</gene>
<sequence length="173" mass="19539">MTETANLFVLGAAGGVEWGTVIVQVLTFIVLLALLKKFAWGPLKDVMDKRERDINRDIDDAEQAKLNAQKLEEENKQKLKETQEEVQKILEDAKVQARQQQEQIIHEANVRANGMIETAQSEINSQKERAIADINNQVSELSVLIASKVLRKEISEQDQKALVDKYLKEAGDK</sequence>
<keyword id="KW-0066">ATP synthesis</keyword>
<keyword id="KW-1003">Cell membrane</keyword>
<keyword id="KW-0138">CF(0)</keyword>
<keyword id="KW-0375">Hydrogen ion transport</keyword>
<keyword id="KW-0406">Ion transport</keyword>
<keyword id="KW-0472">Membrane</keyword>
<keyword id="KW-0812">Transmembrane</keyword>
<keyword id="KW-1133">Transmembrane helix</keyword>
<keyword id="KW-0813">Transport</keyword>
<comment type="function">
    <text evidence="1">F(1)F(0) ATP synthase produces ATP from ADP in the presence of a proton or sodium gradient. F-type ATPases consist of two structural domains, F(1) containing the extramembraneous catalytic core and F(0) containing the membrane proton channel, linked together by a central stalk and a peripheral stalk. During catalysis, ATP synthesis in the catalytic domain of F(1) is coupled via a rotary mechanism of the central stalk subunits to proton translocation.</text>
</comment>
<comment type="function">
    <text evidence="1">Component of the F(0) channel, it forms part of the peripheral stalk, linking F(1) to F(0).</text>
</comment>
<comment type="subunit">
    <text evidence="1">F-type ATPases have 2 components, F(1) - the catalytic core - and F(0) - the membrane proton channel. F(1) has five subunits: alpha(3), beta(3), gamma(1), delta(1), epsilon(1). F(0) has three main subunits: a(1), b(2) and c(10-14). The alpha and beta chains form an alternating ring which encloses part of the gamma chain. F(1) is attached to F(0) by a central stalk formed by the gamma and epsilon chains, while a peripheral stalk is formed by the delta and b chains.</text>
</comment>
<comment type="subcellular location">
    <subcellularLocation>
        <location evidence="1">Cell membrane</location>
        <topology evidence="1">Single-pass membrane protein</topology>
    </subcellularLocation>
</comment>
<comment type="similarity">
    <text evidence="1">Belongs to the ATPase B chain family.</text>
</comment>
<accession>Q2YUJ7</accession>